<sequence length="61" mass="6910">MGKVHGSLARAGKVKSQTPKVEKQEKPKQPKGRAYKRLLYVRRFVNVTNMVGGKRRMNPSS</sequence>
<proteinExistence type="inferred from homology"/>
<evidence type="ECO:0000250" key="1">
    <source>
        <dbReference type="UniProtKB" id="P0CX33"/>
    </source>
</evidence>
<evidence type="ECO:0000256" key="2">
    <source>
        <dbReference type="SAM" id="MobiDB-lite"/>
    </source>
</evidence>
<evidence type="ECO:0000269" key="3">
    <source>
    </source>
</evidence>
<evidence type="ECO:0000305" key="4"/>
<dbReference type="EMBL" id="AJ002731">
    <property type="protein sequence ID" value="CAA05693.1"/>
    <property type="molecule type" value="mRNA"/>
</dbReference>
<dbReference type="EMBL" id="CU329670">
    <property type="protein sequence ID" value="CAC00552.1"/>
    <property type="molecule type" value="Genomic_DNA"/>
</dbReference>
<dbReference type="PIR" id="T39834">
    <property type="entry name" value="T39834"/>
</dbReference>
<dbReference type="RefSeq" id="NP_594767.1">
    <property type="nucleotide sequence ID" value="NM_001020194.2"/>
</dbReference>
<dbReference type="RefSeq" id="NP_595969.1">
    <property type="nucleotide sequence ID" value="NM_001021877.2"/>
</dbReference>
<dbReference type="SMR" id="P0CT62"/>
<dbReference type="FunCoup" id="P0CT62">
    <property type="interactions" value="282"/>
</dbReference>
<dbReference type="STRING" id="284812.P0CT62"/>
<dbReference type="iPTMnet" id="P0CT62"/>
<dbReference type="PaxDb" id="4896-SPAC19B12.04.1"/>
<dbReference type="EnsemblFungi" id="SPAC19B12.04.1">
    <property type="protein sequence ID" value="SPAC19B12.04.1:pep"/>
    <property type="gene ID" value="SPAC19B12.04"/>
</dbReference>
<dbReference type="EnsemblFungi" id="SPBC19G7.03c.1">
    <property type="protein sequence ID" value="SPBC19G7.03c.1:pep"/>
    <property type="gene ID" value="SPBC19G7.03c"/>
</dbReference>
<dbReference type="GeneID" id="2540609"/>
<dbReference type="GeneID" id="2542603"/>
<dbReference type="KEGG" id="spo:2540609"/>
<dbReference type="KEGG" id="spo:2542603"/>
<dbReference type="PomBase" id="SPAC19B12.04">
    <property type="gene designation" value="rps3001"/>
</dbReference>
<dbReference type="VEuPathDB" id="FungiDB:SPAC19B12.04"/>
<dbReference type="VEuPathDB" id="FungiDB:SPBC19G7.03c"/>
<dbReference type="eggNOG" id="KOG0009">
    <property type="taxonomic scope" value="Eukaryota"/>
</dbReference>
<dbReference type="InParanoid" id="P0CT62"/>
<dbReference type="OMA" id="YNTQNVP"/>
<dbReference type="PhylomeDB" id="P0CT62"/>
<dbReference type="PRO" id="PR:P0CT62"/>
<dbReference type="Proteomes" id="UP000002485">
    <property type="component" value="Chromosome I"/>
</dbReference>
<dbReference type="ExpressionAtlas" id="P0CT62">
    <property type="expression patterns" value="differential"/>
</dbReference>
<dbReference type="GO" id="GO:0005829">
    <property type="term" value="C:cytosol"/>
    <property type="evidence" value="ECO:0007005"/>
    <property type="project" value="PomBase"/>
</dbReference>
<dbReference type="GO" id="GO:0022627">
    <property type="term" value="C:cytosolic small ribosomal subunit"/>
    <property type="evidence" value="ECO:0000318"/>
    <property type="project" value="GO_Central"/>
</dbReference>
<dbReference type="GO" id="GO:0005634">
    <property type="term" value="C:nucleus"/>
    <property type="evidence" value="ECO:0007005"/>
    <property type="project" value="PomBase"/>
</dbReference>
<dbReference type="GO" id="GO:0003735">
    <property type="term" value="F:structural constituent of ribosome"/>
    <property type="evidence" value="ECO:0000266"/>
    <property type="project" value="PomBase"/>
</dbReference>
<dbReference type="GO" id="GO:0002181">
    <property type="term" value="P:cytoplasmic translation"/>
    <property type="evidence" value="ECO:0000266"/>
    <property type="project" value="PomBase"/>
</dbReference>
<dbReference type="InterPro" id="IPR006846">
    <property type="entry name" value="Ribosomal_eS30"/>
</dbReference>
<dbReference type="PANTHER" id="PTHR12650">
    <property type="entry name" value="40S RIBOSOMAL PROTEIN S30/UBIQUITIN-LIKE PROTEIN FUBI"/>
    <property type="match status" value="1"/>
</dbReference>
<dbReference type="PANTHER" id="PTHR12650:SF15">
    <property type="entry name" value="RIBOSOMAL PROTEIN S30, ISOFORM A"/>
    <property type="match status" value="1"/>
</dbReference>
<dbReference type="Pfam" id="PF04758">
    <property type="entry name" value="Ribosomal_S30"/>
    <property type="match status" value="1"/>
</dbReference>
<accession>P0CT62</accession>
<accession>O14314</accession>
<accession>O42952</accession>
<comment type="function">
    <text evidence="1">Component of the ribosome, a large ribonucleoprotein complex responsible for the synthesis of proteins in the cell. The small ribosomal subunit (SSU) binds messenger RNAs (mRNAs) and translates the encoded message by selecting cognate aminoacyl-transfer RNA (tRNA) molecules. The large subunit (LSU) contains the ribosomal catalytic site termed the peptidyl transferase center (PTC), which catalyzes the formation of peptide bonds, thereby polymerizing the amino acids delivered by tRNAs into a polypeptide chain. The nascent polypeptides leave the ribosome through a tunnel in the LSU and interact with protein factors that function in enzymatic processing, targeting, and the membrane insertion of nascent chains at the exit of the ribosomal tunnel.</text>
</comment>
<comment type="subunit">
    <text evidence="1">Component of the small ribosomal subunit (SSU). Mature yeast ribosomes consist of a small (40S) and a large (60S) subunit. The 40S small subunit contains 1 molecule of ribosomal RNA (18S rRNA) and at least 33 different proteins. The large 60S subunit contains 3 rRNA molecules (25S, 5.8S and 5S rRNA) and at least 46 different proteins.</text>
</comment>
<comment type="subcellular location">
    <subcellularLocation>
        <location evidence="3">Cytoplasm</location>
    </subcellularLocation>
    <subcellularLocation>
        <location evidence="3">Nucleus</location>
    </subcellularLocation>
</comment>
<comment type="miscellaneous">
    <text>There are 2 genes for eS30 in S.pombe.</text>
</comment>
<comment type="similarity">
    <text evidence="4">Belongs to the eukaryotic ribosomal protein eS30 family.</text>
</comment>
<reference key="1">
    <citation type="submission" date="1997-11" db="EMBL/GenBank/DDBJ databases">
        <title>Transcription of ribosomal genes is down regulated by ammonium starvation in fission yeast.</title>
        <authorList>
            <person name="Lenaers G."/>
            <person name="Perret E."/>
            <person name="Bonnet C."/>
            <person name="Caput D."/>
            <person name="Picard A."/>
        </authorList>
    </citation>
    <scope>NUCLEOTIDE SEQUENCE [MRNA]</scope>
    <source>
        <strain>972 / ATCC 24843</strain>
    </source>
</reference>
<reference key="2">
    <citation type="journal article" date="2002" name="Nature">
        <title>The genome sequence of Schizosaccharomyces pombe.</title>
        <authorList>
            <person name="Wood V."/>
            <person name="Gwilliam R."/>
            <person name="Rajandream M.A."/>
            <person name="Lyne M.H."/>
            <person name="Lyne R."/>
            <person name="Stewart A."/>
            <person name="Sgouros J.G."/>
            <person name="Peat N."/>
            <person name="Hayles J."/>
            <person name="Baker S.G."/>
            <person name="Basham D."/>
            <person name="Bowman S."/>
            <person name="Brooks K."/>
            <person name="Brown D."/>
            <person name="Brown S."/>
            <person name="Chillingworth T."/>
            <person name="Churcher C.M."/>
            <person name="Collins M."/>
            <person name="Connor R."/>
            <person name="Cronin A."/>
            <person name="Davis P."/>
            <person name="Feltwell T."/>
            <person name="Fraser A."/>
            <person name="Gentles S."/>
            <person name="Goble A."/>
            <person name="Hamlin N."/>
            <person name="Harris D.E."/>
            <person name="Hidalgo J."/>
            <person name="Hodgson G."/>
            <person name="Holroyd S."/>
            <person name="Hornsby T."/>
            <person name="Howarth S."/>
            <person name="Huckle E.J."/>
            <person name="Hunt S."/>
            <person name="Jagels K."/>
            <person name="James K.D."/>
            <person name="Jones L."/>
            <person name="Jones M."/>
            <person name="Leather S."/>
            <person name="McDonald S."/>
            <person name="McLean J."/>
            <person name="Mooney P."/>
            <person name="Moule S."/>
            <person name="Mungall K.L."/>
            <person name="Murphy L.D."/>
            <person name="Niblett D."/>
            <person name="Odell C."/>
            <person name="Oliver K."/>
            <person name="O'Neil S."/>
            <person name="Pearson D."/>
            <person name="Quail M.A."/>
            <person name="Rabbinowitsch E."/>
            <person name="Rutherford K.M."/>
            <person name="Rutter S."/>
            <person name="Saunders D."/>
            <person name="Seeger K."/>
            <person name="Sharp S."/>
            <person name="Skelton J."/>
            <person name="Simmonds M.N."/>
            <person name="Squares R."/>
            <person name="Squares S."/>
            <person name="Stevens K."/>
            <person name="Taylor K."/>
            <person name="Taylor R.G."/>
            <person name="Tivey A."/>
            <person name="Walsh S.V."/>
            <person name="Warren T."/>
            <person name="Whitehead S."/>
            <person name="Woodward J.R."/>
            <person name="Volckaert G."/>
            <person name="Aert R."/>
            <person name="Robben J."/>
            <person name="Grymonprez B."/>
            <person name="Weltjens I."/>
            <person name="Vanstreels E."/>
            <person name="Rieger M."/>
            <person name="Schaefer M."/>
            <person name="Mueller-Auer S."/>
            <person name="Gabel C."/>
            <person name="Fuchs M."/>
            <person name="Duesterhoeft A."/>
            <person name="Fritzc C."/>
            <person name="Holzer E."/>
            <person name="Moestl D."/>
            <person name="Hilbert H."/>
            <person name="Borzym K."/>
            <person name="Langer I."/>
            <person name="Beck A."/>
            <person name="Lehrach H."/>
            <person name="Reinhardt R."/>
            <person name="Pohl T.M."/>
            <person name="Eger P."/>
            <person name="Zimmermann W."/>
            <person name="Wedler H."/>
            <person name="Wambutt R."/>
            <person name="Purnelle B."/>
            <person name="Goffeau A."/>
            <person name="Cadieu E."/>
            <person name="Dreano S."/>
            <person name="Gloux S."/>
            <person name="Lelaure V."/>
            <person name="Mottier S."/>
            <person name="Galibert F."/>
            <person name="Aves S.J."/>
            <person name="Xiang Z."/>
            <person name="Hunt C."/>
            <person name="Moore K."/>
            <person name="Hurst S.M."/>
            <person name="Lucas M."/>
            <person name="Rochet M."/>
            <person name="Gaillardin C."/>
            <person name="Tallada V.A."/>
            <person name="Garzon A."/>
            <person name="Thode G."/>
            <person name="Daga R.R."/>
            <person name="Cruzado L."/>
            <person name="Jimenez J."/>
            <person name="Sanchez M."/>
            <person name="del Rey F."/>
            <person name="Benito J."/>
            <person name="Dominguez A."/>
            <person name="Revuelta J.L."/>
            <person name="Moreno S."/>
            <person name="Armstrong J."/>
            <person name="Forsburg S.L."/>
            <person name="Cerutti L."/>
            <person name="Lowe T."/>
            <person name="McCombie W.R."/>
            <person name="Paulsen I."/>
            <person name="Potashkin J."/>
            <person name="Shpakovski G.V."/>
            <person name="Ussery D."/>
            <person name="Barrell B.G."/>
            <person name="Nurse P."/>
        </authorList>
    </citation>
    <scope>NUCLEOTIDE SEQUENCE [LARGE SCALE GENOMIC DNA]</scope>
    <source>
        <strain>972 / ATCC 24843</strain>
    </source>
</reference>
<reference key="3">
    <citation type="journal article" date="2006" name="Nat. Biotechnol.">
        <title>ORFeome cloning and global analysis of protein localization in the fission yeast Schizosaccharomyces pombe.</title>
        <authorList>
            <person name="Matsuyama A."/>
            <person name="Arai R."/>
            <person name="Yashiroda Y."/>
            <person name="Shirai A."/>
            <person name="Kamata A."/>
            <person name="Sekido S."/>
            <person name="Kobayashi Y."/>
            <person name="Hashimoto A."/>
            <person name="Hamamoto M."/>
            <person name="Hiraoka Y."/>
            <person name="Horinouchi S."/>
            <person name="Yoshida M."/>
        </authorList>
    </citation>
    <scope>SUBCELLULAR LOCATION [LARGE SCALE ANALYSIS]</scope>
</reference>
<protein>
    <recommendedName>
        <fullName evidence="4">Small ribosomal subunit protein eS30A</fullName>
    </recommendedName>
    <alternativeName>
        <fullName>40S ribosomal protein S30-A</fullName>
    </alternativeName>
</protein>
<feature type="chain" id="PRO_0000174008" description="Small ribosomal subunit protein eS30A">
    <location>
        <begin position="1"/>
        <end position="61"/>
    </location>
</feature>
<feature type="region of interest" description="Disordered" evidence="2">
    <location>
        <begin position="1"/>
        <end position="36"/>
    </location>
</feature>
<name>RS30A_SCHPO</name>
<keyword id="KW-0963">Cytoplasm</keyword>
<keyword id="KW-0539">Nucleus</keyword>
<keyword id="KW-1185">Reference proteome</keyword>
<keyword id="KW-0687">Ribonucleoprotein</keyword>
<keyword id="KW-0689">Ribosomal protein</keyword>
<gene>
    <name type="primary">rps3001</name>
    <name type="synonym">rps30</name>
    <name type="synonym">rps30a</name>
    <name type="ORF">SPAC19B12.04</name>
</gene>
<organism>
    <name type="scientific">Schizosaccharomyces pombe (strain 972 / ATCC 24843)</name>
    <name type="common">Fission yeast</name>
    <dbReference type="NCBI Taxonomy" id="284812"/>
    <lineage>
        <taxon>Eukaryota</taxon>
        <taxon>Fungi</taxon>
        <taxon>Dikarya</taxon>
        <taxon>Ascomycota</taxon>
        <taxon>Taphrinomycotina</taxon>
        <taxon>Schizosaccharomycetes</taxon>
        <taxon>Schizosaccharomycetales</taxon>
        <taxon>Schizosaccharomycetaceae</taxon>
        <taxon>Schizosaccharomyces</taxon>
    </lineage>
</organism>